<gene>
    <name evidence="1" type="primary">CIA1</name>
    <name type="ordered locus">ACR091W</name>
</gene>
<evidence type="ECO:0000255" key="1">
    <source>
        <dbReference type="HAMAP-Rule" id="MF_03037"/>
    </source>
</evidence>
<accession>Q75C26</accession>
<feature type="chain" id="PRO_0000382499" description="Probable cytosolic iron-sulfur protein assembly protein 1">
    <location>
        <begin position="1"/>
        <end position="328"/>
    </location>
</feature>
<feature type="repeat" description="WD 1">
    <location>
        <begin position="12"/>
        <end position="49"/>
    </location>
</feature>
<feature type="repeat" description="WD 2">
    <location>
        <begin position="54"/>
        <end position="93"/>
    </location>
</feature>
<feature type="repeat" description="WD 3">
    <location>
        <begin position="102"/>
        <end position="141"/>
    </location>
</feature>
<feature type="repeat" description="WD 4">
    <location>
        <begin position="148"/>
        <end position="187"/>
    </location>
</feature>
<feature type="repeat" description="WD 5">
    <location>
        <begin position="192"/>
        <end position="233"/>
    </location>
</feature>
<feature type="repeat" description="WD 6">
    <location>
        <begin position="246"/>
        <end position="284"/>
    </location>
</feature>
<feature type="repeat" description="WD 7">
    <location>
        <begin position="291"/>
        <end position="328"/>
    </location>
</feature>
<protein>
    <recommendedName>
        <fullName evidence="1">Probable cytosolic iron-sulfur protein assembly protein 1</fullName>
    </recommendedName>
</protein>
<name>CIAO1_EREGS</name>
<sequence>MPNLHLVRSLKLHGDRCWSVDISKGLLATGSADRKIKLVDVRNFKLVEELDDTAHKKAVRSVAWRPHCNVLAAGSFDTTVSIWGRDDDDYSGETELLAVIEGHENEVKSVAWSHDGAYLATCSRDKSVWIWEADELSEEFECNSVLQEHSQDVKHIVWHASRLLLASSSYDDTVRIWAEQDDDWECAAVLSGHGGTVWCSDFERAETGIRLCSGSDDTTVRIWRCLTDDADVFDKEWIQETVLPAVHTRAVYSVSWSADGLIASVGSDGVLAVYKEVQAGRWEVVARVDCAHTVYEINVVKWLALDGRVLLVTGGDDGCVNVWELREE</sequence>
<comment type="function">
    <text evidence="1">Essential component of the cytosolic iron-sulfur (Fe/S) protein assembly machinery. Required for the maturation of extramitochondrial Fe/S proteins.</text>
</comment>
<comment type="subunit">
    <text evidence="1">Interacts with NAR1.</text>
</comment>
<comment type="subcellular location">
    <subcellularLocation>
        <location evidence="1">Cytoplasm</location>
    </subcellularLocation>
    <subcellularLocation>
        <location evidence="1">Nucleus</location>
    </subcellularLocation>
    <text evidence="1">Preferentially localized to the nucleus.</text>
</comment>
<comment type="similarity">
    <text evidence="1">Belongs to the WD repeat CIA1 family.</text>
</comment>
<dbReference type="EMBL" id="AE016816">
    <property type="protein sequence ID" value="AAS51317.1"/>
    <property type="molecule type" value="Genomic_DNA"/>
</dbReference>
<dbReference type="RefSeq" id="NP_983493.1">
    <property type="nucleotide sequence ID" value="NM_208846.1"/>
</dbReference>
<dbReference type="SMR" id="Q75C26"/>
<dbReference type="FunCoup" id="Q75C26">
    <property type="interactions" value="81"/>
</dbReference>
<dbReference type="STRING" id="284811.Q75C26"/>
<dbReference type="EnsemblFungi" id="AAS51317">
    <property type="protein sequence ID" value="AAS51317"/>
    <property type="gene ID" value="AGOS_ACR091W"/>
</dbReference>
<dbReference type="GeneID" id="4619620"/>
<dbReference type="KEGG" id="ago:AGOS_ACR091W"/>
<dbReference type="eggNOG" id="KOG0645">
    <property type="taxonomic scope" value="Eukaryota"/>
</dbReference>
<dbReference type="HOGENOM" id="CLU_000288_57_8_1"/>
<dbReference type="InParanoid" id="Q75C26"/>
<dbReference type="OMA" id="MPILASC"/>
<dbReference type="OrthoDB" id="284782at2759"/>
<dbReference type="Proteomes" id="UP000000591">
    <property type="component" value="Chromosome III"/>
</dbReference>
<dbReference type="GO" id="GO:0097361">
    <property type="term" value="C:cytosolic [4Fe-4S] assembly targeting complex"/>
    <property type="evidence" value="ECO:0000318"/>
    <property type="project" value="GO_Central"/>
</dbReference>
<dbReference type="GO" id="GO:0005634">
    <property type="term" value="C:nucleus"/>
    <property type="evidence" value="ECO:0007669"/>
    <property type="project" value="UniProtKB-SubCell"/>
</dbReference>
<dbReference type="GO" id="GO:0016226">
    <property type="term" value="P:iron-sulfur cluster assembly"/>
    <property type="evidence" value="ECO:0000318"/>
    <property type="project" value="GO_Central"/>
</dbReference>
<dbReference type="GO" id="GO:0002098">
    <property type="term" value="P:tRNA wobble uridine modification"/>
    <property type="evidence" value="ECO:0007669"/>
    <property type="project" value="EnsemblFungi"/>
</dbReference>
<dbReference type="CDD" id="cd00200">
    <property type="entry name" value="WD40"/>
    <property type="match status" value="1"/>
</dbReference>
<dbReference type="FunFam" id="2.130.10.10:FF:000705">
    <property type="entry name" value="Probable cytosolic iron-sulfur protein assembly protein 1"/>
    <property type="match status" value="1"/>
</dbReference>
<dbReference type="Gene3D" id="2.130.10.10">
    <property type="entry name" value="YVTN repeat-like/Quinoprotein amine dehydrogenase"/>
    <property type="match status" value="1"/>
</dbReference>
<dbReference type="HAMAP" id="MF_03037">
    <property type="entry name" value="ciao1"/>
    <property type="match status" value="1"/>
</dbReference>
<dbReference type="InterPro" id="IPR028608">
    <property type="entry name" value="CIAO1/Cia1"/>
</dbReference>
<dbReference type="InterPro" id="IPR020472">
    <property type="entry name" value="G-protein_beta_WD-40_rep"/>
</dbReference>
<dbReference type="InterPro" id="IPR015943">
    <property type="entry name" value="WD40/YVTN_repeat-like_dom_sf"/>
</dbReference>
<dbReference type="InterPro" id="IPR019775">
    <property type="entry name" value="WD40_repeat_CS"/>
</dbReference>
<dbReference type="InterPro" id="IPR036322">
    <property type="entry name" value="WD40_repeat_dom_sf"/>
</dbReference>
<dbReference type="InterPro" id="IPR001680">
    <property type="entry name" value="WD40_rpt"/>
</dbReference>
<dbReference type="PANTHER" id="PTHR19920:SF0">
    <property type="entry name" value="CYTOSOLIC IRON-SULFUR PROTEIN ASSEMBLY PROTEIN CIAO1-RELATED"/>
    <property type="match status" value="1"/>
</dbReference>
<dbReference type="PANTHER" id="PTHR19920">
    <property type="entry name" value="WD40 PROTEIN CIAO1"/>
    <property type="match status" value="1"/>
</dbReference>
<dbReference type="Pfam" id="PF00400">
    <property type="entry name" value="WD40"/>
    <property type="match status" value="7"/>
</dbReference>
<dbReference type="PRINTS" id="PR00320">
    <property type="entry name" value="GPROTEINBRPT"/>
</dbReference>
<dbReference type="SMART" id="SM00320">
    <property type="entry name" value="WD40"/>
    <property type="match status" value="7"/>
</dbReference>
<dbReference type="SUPFAM" id="SSF50978">
    <property type="entry name" value="WD40 repeat-like"/>
    <property type="match status" value="1"/>
</dbReference>
<dbReference type="PROSITE" id="PS00678">
    <property type="entry name" value="WD_REPEATS_1"/>
    <property type="match status" value="2"/>
</dbReference>
<dbReference type="PROSITE" id="PS50082">
    <property type="entry name" value="WD_REPEATS_2"/>
    <property type="match status" value="5"/>
</dbReference>
<dbReference type="PROSITE" id="PS50294">
    <property type="entry name" value="WD_REPEATS_REGION"/>
    <property type="match status" value="1"/>
</dbReference>
<proteinExistence type="inferred from homology"/>
<reference key="1">
    <citation type="journal article" date="2004" name="Science">
        <title>The Ashbya gossypii genome as a tool for mapping the ancient Saccharomyces cerevisiae genome.</title>
        <authorList>
            <person name="Dietrich F.S."/>
            <person name="Voegeli S."/>
            <person name="Brachat S."/>
            <person name="Lerch A."/>
            <person name="Gates K."/>
            <person name="Steiner S."/>
            <person name="Mohr C."/>
            <person name="Poehlmann R."/>
            <person name="Luedi P."/>
            <person name="Choi S."/>
            <person name="Wing R.A."/>
            <person name="Flavier A."/>
            <person name="Gaffney T.D."/>
            <person name="Philippsen P."/>
        </authorList>
    </citation>
    <scope>NUCLEOTIDE SEQUENCE [LARGE SCALE GENOMIC DNA]</scope>
    <source>
        <strain>ATCC 10895 / CBS 109.51 / FGSC 9923 / NRRL Y-1056</strain>
    </source>
</reference>
<reference key="2">
    <citation type="journal article" date="2013" name="G3 (Bethesda)">
        <title>Genomes of Ashbya fungi isolated from insects reveal four mating-type loci, numerous translocations, lack of transposons, and distinct gene duplications.</title>
        <authorList>
            <person name="Dietrich F.S."/>
            <person name="Voegeli S."/>
            <person name="Kuo S."/>
            <person name="Philippsen P."/>
        </authorList>
    </citation>
    <scope>GENOME REANNOTATION</scope>
    <source>
        <strain>ATCC 10895 / CBS 109.51 / FGSC 9923 / NRRL Y-1056</strain>
    </source>
</reference>
<organism>
    <name type="scientific">Eremothecium gossypii (strain ATCC 10895 / CBS 109.51 / FGSC 9923 / NRRL Y-1056)</name>
    <name type="common">Yeast</name>
    <name type="synonym">Ashbya gossypii</name>
    <dbReference type="NCBI Taxonomy" id="284811"/>
    <lineage>
        <taxon>Eukaryota</taxon>
        <taxon>Fungi</taxon>
        <taxon>Dikarya</taxon>
        <taxon>Ascomycota</taxon>
        <taxon>Saccharomycotina</taxon>
        <taxon>Saccharomycetes</taxon>
        <taxon>Saccharomycetales</taxon>
        <taxon>Saccharomycetaceae</taxon>
        <taxon>Eremothecium</taxon>
    </lineage>
</organism>
<keyword id="KW-0963">Cytoplasm</keyword>
<keyword id="KW-0539">Nucleus</keyword>
<keyword id="KW-1185">Reference proteome</keyword>
<keyword id="KW-0677">Repeat</keyword>
<keyword id="KW-0853">WD repeat</keyword>